<proteinExistence type="inferred from homology"/>
<accession>Q550C1</accession>
<accession>Q86K85</accession>
<keyword id="KW-0472">Membrane</keyword>
<keyword id="KW-1185">Reference proteome</keyword>
<keyword id="KW-0812">Transmembrane</keyword>
<keyword id="KW-1133">Transmembrane helix</keyword>
<feature type="chain" id="PRO_0000328881" description="Protein TAPT1 homolog">
    <location>
        <begin position="1"/>
        <end position="828"/>
    </location>
</feature>
<feature type="transmembrane region" description="Helical" evidence="1">
    <location>
        <begin position="428"/>
        <end position="448"/>
    </location>
</feature>
<feature type="transmembrane region" description="Helical" evidence="1">
    <location>
        <begin position="472"/>
        <end position="492"/>
    </location>
</feature>
<feature type="transmembrane region" description="Helical" evidence="1">
    <location>
        <begin position="562"/>
        <end position="582"/>
    </location>
</feature>
<feature type="transmembrane region" description="Helical" evidence="1">
    <location>
        <begin position="722"/>
        <end position="742"/>
    </location>
</feature>
<feature type="transmembrane region" description="Helical" evidence="1">
    <location>
        <begin position="754"/>
        <end position="774"/>
    </location>
</feature>
<feature type="region of interest" description="Disordered" evidence="2">
    <location>
        <begin position="67"/>
        <end position="92"/>
    </location>
</feature>
<feature type="region of interest" description="Disordered" evidence="2">
    <location>
        <begin position="212"/>
        <end position="236"/>
    </location>
</feature>
<feature type="region of interest" description="Disordered" evidence="2">
    <location>
        <begin position="297"/>
        <end position="346"/>
    </location>
</feature>
<feature type="region of interest" description="Disordered" evidence="2">
    <location>
        <begin position="797"/>
        <end position="828"/>
    </location>
</feature>
<feature type="compositionally biased region" description="Low complexity" evidence="2">
    <location>
        <begin position="67"/>
        <end position="83"/>
    </location>
</feature>
<feature type="compositionally biased region" description="Low complexity" evidence="2">
    <location>
        <begin position="212"/>
        <end position="233"/>
    </location>
</feature>
<feature type="compositionally biased region" description="Low complexity" evidence="2">
    <location>
        <begin position="302"/>
        <end position="321"/>
    </location>
</feature>
<feature type="compositionally biased region" description="Low complexity" evidence="2">
    <location>
        <begin position="797"/>
        <end position="822"/>
    </location>
</feature>
<sequence length="828" mass="93486">MEDKNILYESIPTSTNNNELLPLQLIPIKPNITQEEQDLLDNIVKNESIIPMSPKIPININNNNTINNNNNNNSNNVSSGNHITNSNSNSSGNLKDSFDLNSVIDSTCVMTSPIAVSPPIINKLINNKENILNINGILENNINCTNDNQELINILLNKNQLQQQQQQQQQLYLQQQQLQQLQQQIQQIQQQLQQQQQQNSIFRPITPKIIDQQTQPQPQPQTQTTQQPSSQQPFSYEKTPVLASRTISTQKSNSPIPFPNLGTLINDPINSTSSTASNTKSQIPSTPLLVKSTENIQTTPQSNNNDNNDNNNNNNSKNNNNLTDINEDKNNGIEQSSSGNTTTSSITMTAAATTTTTTTTATTATTTTATTTSIKVEPKKKSTSLWSFKTYLYDEIHGGYLSNEANDTLKREQVYNFVHVPWELEKLISFGFLVCFDSFLFLFTFLPIRFFLSFLKFLISPFSKKNKLTTNQIFDLFRGFIWVTCFVFLNFIDSSMLYHYIRGQAVIKLYVIYNVLEVLDKLCCSFGQDIFDSLYWMSFSLTSSNRNRQDGLVPKQRNETRILGPFTHLLVATGYVCLHSLVLFSQVITLNVAINSYNNALLTLMISNQFVELKGSVFKRFEKENLFQISCSDIVERFQAFIFLTIIIFQNLSDLNWDLSWDFAINMLTVVGTVWGSEVLVDAIKHAFITKFNKFSPQMYSKFFVLLSDTIVDPRNRNFTESSWGVNNIIGFVPFPLASIVVRVFHKFIPSKGIFGIFLMVQIYICLVLLKIFIKIIILGQCLSKTTNYDNTTTTILSSSSSSSSSNSLNTTSTTSTSTSTTNDKKNN</sequence>
<comment type="subcellular location">
    <subcellularLocation>
        <location evidence="3">Membrane</location>
        <topology evidence="3">Multi-pass membrane protein</topology>
    </subcellularLocation>
</comment>
<comment type="similarity">
    <text evidence="3">Belongs to the TAPT1 family.</text>
</comment>
<gene>
    <name type="ORF">DDB_G0277313</name>
</gene>
<name>TAPT1_DICDI</name>
<evidence type="ECO:0000255" key="1"/>
<evidence type="ECO:0000256" key="2">
    <source>
        <dbReference type="SAM" id="MobiDB-lite"/>
    </source>
</evidence>
<evidence type="ECO:0000305" key="3"/>
<protein>
    <recommendedName>
        <fullName>Protein TAPT1 homolog</fullName>
    </recommendedName>
</protein>
<dbReference type="EMBL" id="AAFI02000019">
    <property type="protein sequence ID" value="EAL68843.2"/>
    <property type="molecule type" value="Genomic_DNA"/>
</dbReference>
<dbReference type="RefSeq" id="XP_642695.2">
    <property type="nucleotide sequence ID" value="XM_637603.2"/>
</dbReference>
<dbReference type="STRING" id="44689.Q550C1"/>
<dbReference type="PaxDb" id="44689-DDB0304431"/>
<dbReference type="EnsemblProtists" id="EAL68843">
    <property type="protein sequence ID" value="EAL68843"/>
    <property type="gene ID" value="DDB_G0277313"/>
</dbReference>
<dbReference type="GeneID" id="8620885"/>
<dbReference type="KEGG" id="ddi:DDB_G0277313"/>
<dbReference type="dictyBase" id="DDB_G0277313"/>
<dbReference type="VEuPathDB" id="AmoebaDB:DDB_G0277313"/>
<dbReference type="eggNOG" id="KOG2490">
    <property type="taxonomic scope" value="Eukaryota"/>
</dbReference>
<dbReference type="HOGENOM" id="CLU_342381_0_0_1"/>
<dbReference type="InParanoid" id="Q550C1"/>
<dbReference type="OMA" id="VQIYICL"/>
<dbReference type="PRO" id="PR:Q550C1"/>
<dbReference type="Proteomes" id="UP000002195">
    <property type="component" value="Chromosome 2"/>
</dbReference>
<dbReference type="GO" id="GO:0005789">
    <property type="term" value="C:endoplasmic reticulum membrane"/>
    <property type="evidence" value="ECO:0000318"/>
    <property type="project" value="GO_Central"/>
</dbReference>
<dbReference type="InterPro" id="IPR008010">
    <property type="entry name" value="Tatp1"/>
</dbReference>
<dbReference type="PANTHER" id="PTHR13317">
    <property type="entry name" value="TRANSMEMBRANE ANTERIOR POSTERIOR TRANSFORMATION PROTEIN 1 HOMOLOG"/>
    <property type="match status" value="1"/>
</dbReference>
<dbReference type="PANTHER" id="PTHR13317:SF4">
    <property type="entry name" value="TRANSMEMBRANE ANTERIOR POSTERIOR TRANSFORMATION PROTEIN 1 HOMOLOG"/>
    <property type="match status" value="1"/>
</dbReference>
<dbReference type="Pfam" id="PF05346">
    <property type="entry name" value="DUF747"/>
    <property type="match status" value="1"/>
</dbReference>
<dbReference type="SUPFAM" id="SSF81995">
    <property type="entry name" value="beta-sandwich domain of Sec23/24"/>
    <property type="match status" value="1"/>
</dbReference>
<reference key="1">
    <citation type="journal article" date="2002" name="Nature">
        <title>Sequence and analysis of chromosome 2 of Dictyostelium discoideum.</title>
        <authorList>
            <person name="Gloeckner G."/>
            <person name="Eichinger L."/>
            <person name="Szafranski K."/>
            <person name="Pachebat J.A."/>
            <person name="Bankier A.T."/>
            <person name="Dear P.H."/>
            <person name="Lehmann R."/>
            <person name="Baumgart C."/>
            <person name="Parra G."/>
            <person name="Abril J.F."/>
            <person name="Guigo R."/>
            <person name="Kumpf K."/>
            <person name="Tunggal B."/>
            <person name="Cox E.C."/>
            <person name="Quail M.A."/>
            <person name="Platzer M."/>
            <person name="Rosenthal A."/>
            <person name="Noegel A.A."/>
        </authorList>
    </citation>
    <scope>NUCLEOTIDE SEQUENCE [LARGE SCALE GENOMIC DNA]</scope>
    <source>
        <strain>AX4</strain>
    </source>
</reference>
<reference key="2">
    <citation type="journal article" date="2005" name="Nature">
        <title>The genome of the social amoeba Dictyostelium discoideum.</title>
        <authorList>
            <person name="Eichinger L."/>
            <person name="Pachebat J.A."/>
            <person name="Gloeckner G."/>
            <person name="Rajandream M.A."/>
            <person name="Sucgang R."/>
            <person name="Berriman M."/>
            <person name="Song J."/>
            <person name="Olsen R."/>
            <person name="Szafranski K."/>
            <person name="Xu Q."/>
            <person name="Tunggal B."/>
            <person name="Kummerfeld S."/>
            <person name="Madera M."/>
            <person name="Konfortov B.A."/>
            <person name="Rivero F."/>
            <person name="Bankier A.T."/>
            <person name="Lehmann R."/>
            <person name="Hamlin N."/>
            <person name="Davies R."/>
            <person name="Gaudet P."/>
            <person name="Fey P."/>
            <person name="Pilcher K."/>
            <person name="Chen G."/>
            <person name="Saunders D."/>
            <person name="Sodergren E.J."/>
            <person name="Davis P."/>
            <person name="Kerhornou A."/>
            <person name="Nie X."/>
            <person name="Hall N."/>
            <person name="Anjard C."/>
            <person name="Hemphill L."/>
            <person name="Bason N."/>
            <person name="Farbrother P."/>
            <person name="Desany B."/>
            <person name="Just E."/>
            <person name="Morio T."/>
            <person name="Rost R."/>
            <person name="Churcher C.M."/>
            <person name="Cooper J."/>
            <person name="Haydock S."/>
            <person name="van Driessche N."/>
            <person name="Cronin A."/>
            <person name="Goodhead I."/>
            <person name="Muzny D.M."/>
            <person name="Mourier T."/>
            <person name="Pain A."/>
            <person name="Lu M."/>
            <person name="Harper D."/>
            <person name="Lindsay R."/>
            <person name="Hauser H."/>
            <person name="James K.D."/>
            <person name="Quiles M."/>
            <person name="Madan Babu M."/>
            <person name="Saito T."/>
            <person name="Buchrieser C."/>
            <person name="Wardroper A."/>
            <person name="Felder M."/>
            <person name="Thangavelu M."/>
            <person name="Johnson D."/>
            <person name="Knights A."/>
            <person name="Loulseged H."/>
            <person name="Mungall K.L."/>
            <person name="Oliver K."/>
            <person name="Price C."/>
            <person name="Quail M.A."/>
            <person name="Urushihara H."/>
            <person name="Hernandez J."/>
            <person name="Rabbinowitsch E."/>
            <person name="Steffen D."/>
            <person name="Sanders M."/>
            <person name="Ma J."/>
            <person name="Kohara Y."/>
            <person name="Sharp S."/>
            <person name="Simmonds M.N."/>
            <person name="Spiegler S."/>
            <person name="Tivey A."/>
            <person name="Sugano S."/>
            <person name="White B."/>
            <person name="Walker D."/>
            <person name="Woodward J.R."/>
            <person name="Winckler T."/>
            <person name="Tanaka Y."/>
            <person name="Shaulsky G."/>
            <person name="Schleicher M."/>
            <person name="Weinstock G.M."/>
            <person name="Rosenthal A."/>
            <person name="Cox E.C."/>
            <person name="Chisholm R.L."/>
            <person name="Gibbs R.A."/>
            <person name="Loomis W.F."/>
            <person name="Platzer M."/>
            <person name="Kay R.R."/>
            <person name="Williams J.G."/>
            <person name="Dear P.H."/>
            <person name="Noegel A.A."/>
            <person name="Barrell B.G."/>
            <person name="Kuspa A."/>
        </authorList>
    </citation>
    <scope>NUCLEOTIDE SEQUENCE [LARGE SCALE GENOMIC DNA]</scope>
    <source>
        <strain>AX4</strain>
    </source>
</reference>
<organism>
    <name type="scientific">Dictyostelium discoideum</name>
    <name type="common">Social amoeba</name>
    <dbReference type="NCBI Taxonomy" id="44689"/>
    <lineage>
        <taxon>Eukaryota</taxon>
        <taxon>Amoebozoa</taxon>
        <taxon>Evosea</taxon>
        <taxon>Eumycetozoa</taxon>
        <taxon>Dictyostelia</taxon>
        <taxon>Dictyosteliales</taxon>
        <taxon>Dictyosteliaceae</taxon>
        <taxon>Dictyostelium</taxon>
    </lineage>
</organism>